<proteinExistence type="inferred from homology"/>
<feature type="chain" id="PRO_1000141401" description="Large ribosomal subunit protein uL1">
    <location>
        <begin position="1"/>
        <end position="234"/>
    </location>
</feature>
<name>RL1_ECOLU</name>
<organism>
    <name type="scientific">Escherichia coli O17:K52:H18 (strain UMN026 / ExPEC)</name>
    <dbReference type="NCBI Taxonomy" id="585056"/>
    <lineage>
        <taxon>Bacteria</taxon>
        <taxon>Pseudomonadati</taxon>
        <taxon>Pseudomonadota</taxon>
        <taxon>Gammaproteobacteria</taxon>
        <taxon>Enterobacterales</taxon>
        <taxon>Enterobacteriaceae</taxon>
        <taxon>Escherichia</taxon>
    </lineage>
</organism>
<sequence>MAKLTKRMRVIREKVDATKQYDINEAIALLKELATAKFVESVDVAVNLGIDARKSDQNVRGATVLPHGTGRSVRVAVFTQGANAEAAKAAGAELVGMEDLADQIKKGEMNFDVVIASPDAMRVVGQLGQVLGPRGLMPNPKVGTVTPNVAEAVKNAKAGQVRYRNDKNGIIHTTIGKVDFDADKLKENLEALLVALKKAKPTQAKGVYIKKVSISTTMGAGVAVDQAGLSASVN</sequence>
<protein>
    <recommendedName>
        <fullName evidence="1">Large ribosomal subunit protein uL1</fullName>
    </recommendedName>
    <alternativeName>
        <fullName evidence="2">50S ribosomal protein L1</fullName>
    </alternativeName>
</protein>
<gene>
    <name evidence="1" type="primary">rplA</name>
    <name type="ordered locus">ECUMN_4506</name>
</gene>
<keyword id="KW-0678">Repressor</keyword>
<keyword id="KW-0687">Ribonucleoprotein</keyword>
<keyword id="KW-0689">Ribosomal protein</keyword>
<keyword id="KW-0694">RNA-binding</keyword>
<keyword id="KW-0699">rRNA-binding</keyword>
<keyword id="KW-0810">Translation regulation</keyword>
<keyword id="KW-0820">tRNA-binding</keyword>
<dbReference type="EMBL" id="CU928163">
    <property type="protein sequence ID" value="CAR15631.1"/>
    <property type="molecule type" value="Genomic_DNA"/>
</dbReference>
<dbReference type="RefSeq" id="WP_001096684.1">
    <property type="nucleotide sequence ID" value="NC_011751.1"/>
</dbReference>
<dbReference type="RefSeq" id="YP_002415121.1">
    <property type="nucleotide sequence ID" value="NC_011751.1"/>
</dbReference>
<dbReference type="SMR" id="B7NFS4"/>
<dbReference type="STRING" id="585056.ECUMN_4506"/>
<dbReference type="GeneID" id="93777910"/>
<dbReference type="KEGG" id="eum:ECUMN_4506"/>
<dbReference type="PATRIC" id="fig|585056.7.peg.4677"/>
<dbReference type="HOGENOM" id="CLU_062853_0_0_6"/>
<dbReference type="Proteomes" id="UP000007097">
    <property type="component" value="Chromosome"/>
</dbReference>
<dbReference type="GO" id="GO:0022625">
    <property type="term" value="C:cytosolic large ribosomal subunit"/>
    <property type="evidence" value="ECO:0007669"/>
    <property type="project" value="TreeGrafter"/>
</dbReference>
<dbReference type="GO" id="GO:0019843">
    <property type="term" value="F:rRNA binding"/>
    <property type="evidence" value="ECO:0007669"/>
    <property type="project" value="UniProtKB-UniRule"/>
</dbReference>
<dbReference type="GO" id="GO:0003735">
    <property type="term" value="F:structural constituent of ribosome"/>
    <property type="evidence" value="ECO:0007669"/>
    <property type="project" value="InterPro"/>
</dbReference>
<dbReference type="GO" id="GO:0000049">
    <property type="term" value="F:tRNA binding"/>
    <property type="evidence" value="ECO:0007669"/>
    <property type="project" value="UniProtKB-KW"/>
</dbReference>
<dbReference type="GO" id="GO:0006417">
    <property type="term" value="P:regulation of translation"/>
    <property type="evidence" value="ECO:0007669"/>
    <property type="project" value="UniProtKB-KW"/>
</dbReference>
<dbReference type="GO" id="GO:0006412">
    <property type="term" value="P:translation"/>
    <property type="evidence" value="ECO:0007669"/>
    <property type="project" value="UniProtKB-UniRule"/>
</dbReference>
<dbReference type="CDD" id="cd00403">
    <property type="entry name" value="Ribosomal_L1"/>
    <property type="match status" value="1"/>
</dbReference>
<dbReference type="FunFam" id="3.40.50.790:FF:000001">
    <property type="entry name" value="50S ribosomal protein L1"/>
    <property type="match status" value="1"/>
</dbReference>
<dbReference type="Gene3D" id="3.30.190.20">
    <property type="match status" value="1"/>
</dbReference>
<dbReference type="Gene3D" id="3.40.50.790">
    <property type="match status" value="1"/>
</dbReference>
<dbReference type="HAMAP" id="MF_01318_B">
    <property type="entry name" value="Ribosomal_uL1_B"/>
    <property type="match status" value="1"/>
</dbReference>
<dbReference type="InterPro" id="IPR005878">
    <property type="entry name" value="Ribosom_uL1_bac-type"/>
</dbReference>
<dbReference type="InterPro" id="IPR002143">
    <property type="entry name" value="Ribosomal_uL1"/>
</dbReference>
<dbReference type="InterPro" id="IPR023674">
    <property type="entry name" value="Ribosomal_uL1-like"/>
</dbReference>
<dbReference type="InterPro" id="IPR028364">
    <property type="entry name" value="Ribosomal_uL1/biogenesis"/>
</dbReference>
<dbReference type="InterPro" id="IPR016095">
    <property type="entry name" value="Ribosomal_uL1_3-a/b-sand"/>
</dbReference>
<dbReference type="InterPro" id="IPR023673">
    <property type="entry name" value="Ribosomal_uL1_CS"/>
</dbReference>
<dbReference type="NCBIfam" id="TIGR01169">
    <property type="entry name" value="rplA_bact"/>
    <property type="match status" value="1"/>
</dbReference>
<dbReference type="PANTHER" id="PTHR36427">
    <property type="entry name" value="54S RIBOSOMAL PROTEIN L1, MITOCHONDRIAL"/>
    <property type="match status" value="1"/>
</dbReference>
<dbReference type="PANTHER" id="PTHR36427:SF3">
    <property type="entry name" value="LARGE RIBOSOMAL SUBUNIT PROTEIN UL1M"/>
    <property type="match status" value="1"/>
</dbReference>
<dbReference type="Pfam" id="PF00687">
    <property type="entry name" value="Ribosomal_L1"/>
    <property type="match status" value="1"/>
</dbReference>
<dbReference type="PIRSF" id="PIRSF002155">
    <property type="entry name" value="Ribosomal_L1"/>
    <property type="match status" value="1"/>
</dbReference>
<dbReference type="SUPFAM" id="SSF56808">
    <property type="entry name" value="Ribosomal protein L1"/>
    <property type="match status" value="1"/>
</dbReference>
<dbReference type="PROSITE" id="PS01199">
    <property type="entry name" value="RIBOSOMAL_L1"/>
    <property type="match status" value="1"/>
</dbReference>
<comment type="function">
    <text evidence="1">Binds directly to 23S rRNA. The L1 stalk is quite mobile in the ribosome, and is involved in E site tRNA release.</text>
</comment>
<comment type="function">
    <text evidence="1">Protein L1 is also a translational repressor protein, it controls the translation of the L11 operon by binding to its mRNA.</text>
</comment>
<comment type="subunit">
    <text evidence="1">Part of the 50S ribosomal subunit.</text>
</comment>
<comment type="similarity">
    <text evidence="1">Belongs to the universal ribosomal protein uL1 family.</text>
</comment>
<evidence type="ECO:0000255" key="1">
    <source>
        <dbReference type="HAMAP-Rule" id="MF_01318"/>
    </source>
</evidence>
<evidence type="ECO:0000305" key="2"/>
<accession>B7NFS4</accession>
<reference key="1">
    <citation type="journal article" date="2009" name="PLoS Genet.">
        <title>Organised genome dynamics in the Escherichia coli species results in highly diverse adaptive paths.</title>
        <authorList>
            <person name="Touchon M."/>
            <person name="Hoede C."/>
            <person name="Tenaillon O."/>
            <person name="Barbe V."/>
            <person name="Baeriswyl S."/>
            <person name="Bidet P."/>
            <person name="Bingen E."/>
            <person name="Bonacorsi S."/>
            <person name="Bouchier C."/>
            <person name="Bouvet O."/>
            <person name="Calteau A."/>
            <person name="Chiapello H."/>
            <person name="Clermont O."/>
            <person name="Cruveiller S."/>
            <person name="Danchin A."/>
            <person name="Diard M."/>
            <person name="Dossat C."/>
            <person name="Karoui M.E."/>
            <person name="Frapy E."/>
            <person name="Garry L."/>
            <person name="Ghigo J.M."/>
            <person name="Gilles A.M."/>
            <person name="Johnson J."/>
            <person name="Le Bouguenec C."/>
            <person name="Lescat M."/>
            <person name="Mangenot S."/>
            <person name="Martinez-Jehanne V."/>
            <person name="Matic I."/>
            <person name="Nassif X."/>
            <person name="Oztas S."/>
            <person name="Petit M.A."/>
            <person name="Pichon C."/>
            <person name="Rouy Z."/>
            <person name="Ruf C.S."/>
            <person name="Schneider D."/>
            <person name="Tourret J."/>
            <person name="Vacherie B."/>
            <person name="Vallenet D."/>
            <person name="Medigue C."/>
            <person name="Rocha E.P.C."/>
            <person name="Denamur E."/>
        </authorList>
    </citation>
    <scope>NUCLEOTIDE SEQUENCE [LARGE SCALE GENOMIC DNA]</scope>
    <source>
        <strain>UMN026 / ExPEC</strain>
    </source>
</reference>